<reference key="1">
    <citation type="journal article" date="2020" name="Nature">
        <title>A new coronavirus associated with human respiratory disease in China.</title>
        <authorList>
            <person name="Wu F."/>
            <person name="Zhao S."/>
            <person name="Yu B."/>
            <person name="Chen Y.-M."/>
            <person name="Wang W."/>
            <person name="Song Z.-G."/>
            <person name="Hu Y."/>
            <person name="Tao Z.-W."/>
            <person name="Tian J.-H."/>
            <person name="Pei Y.-Y."/>
            <person name="Yuan M.-L."/>
            <person name="Zhang Y.-L."/>
            <person name="Dai F.-H."/>
            <person name="Liu Y."/>
            <person name="Wang Q.-M."/>
            <person name="Zheng J.-J."/>
            <person name="Xu L."/>
            <person name="Holmes E.C."/>
            <person name="Zhang Y.-Z."/>
        </authorList>
    </citation>
    <scope>NUCLEOTIDE SEQUENCE [GENOMIC RNA]</scope>
</reference>
<reference key="2">
    <citation type="journal article" date="2020" name="Science">
        <title>Comparative host-coronavirus protein interaction networks reveal pan-viral disease mechanisms.</title>
        <authorList>
            <consortium name="QCRG Structural Biology Consortium"/>
            <consortium name="Zoonomia Consortium"/>
            <person name="Gordon D.E."/>
            <person name="Hiatt J."/>
            <person name="Bouhaddou M."/>
            <person name="Rezelj V.V."/>
            <person name="Ulferts S."/>
            <person name="Braberg H."/>
            <person name="Jureka A.S."/>
            <person name="Obernier K."/>
            <person name="Guo J.Z."/>
            <person name="Batra J."/>
            <person name="Kaake R.M."/>
            <person name="Weckstein A.R."/>
            <person name="Owens T.W."/>
            <person name="Gupta M."/>
            <person name="Pourmal S."/>
            <person name="Titus E.W."/>
            <person name="Cakir M."/>
            <person name="Soucheray M."/>
            <person name="McGregor M."/>
            <person name="Cakir Z."/>
            <person name="Jang G."/>
            <person name="O'Meara M.J."/>
            <person name="Tummino T.A."/>
            <person name="Zhang Z."/>
            <person name="Foussard H."/>
            <person name="Rojc A."/>
            <person name="Zhou Y."/>
            <person name="Kuchenov D."/>
            <person name="Huettenhain R."/>
            <person name="Xu J."/>
            <person name="Eckhardt M."/>
            <person name="Swaney D.L."/>
            <person name="Fabius J.M."/>
            <person name="Ummadi M."/>
            <person name="Tutuncuoglu B."/>
            <person name="Rathore U."/>
            <person name="Modak M."/>
            <person name="Haas P."/>
            <person name="Haas K.M."/>
            <person name="Naing Z.Z.C."/>
            <person name="Pulido E.H."/>
            <person name="Shi Y."/>
            <person name="Barrio-Hernandez I."/>
            <person name="Memon D."/>
            <person name="Petsalaki E."/>
            <person name="Dunham A."/>
            <person name="Marrero M.C."/>
            <person name="Burke D."/>
            <person name="Koh C."/>
            <person name="Vallet T."/>
            <person name="Silvas J.A."/>
            <person name="Azumaya C.M."/>
            <person name="Billesboelle C."/>
            <person name="Brilot A.F."/>
            <person name="Campbell M.G."/>
            <person name="Diallo A."/>
            <person name="Dickinson M.S."/>
            <person name="Diwanji D."/>
            <person name="Herrera N."/>
            <person name="Hoppe N."/>
            <person name="Kratochvil H.T."/>
            <person name="Liu Y."/>
            <person name="Merz G.E."/>
            <person name="Moritz M."/>
            <person name="Nguyen H.C."/>
            <person name="Nowotny C."/>
            <person name="Puchades C."/>
            <person name="Rizo A.N."/>
            <person name="Schulze-Gahmen U."/>
            <person name="Smith A.M."/>
            <person name="Sun M."/>
            <person name="Young I.D."/>
            <person name="Zhao J."/>
            <person name="Asarnow D."/>
            <person name="Biel J."/>
            <person name="Bowen A."/>
            <person name="Braxton J.R."/>
            <person name="Chen J."/>
            <person name="Chio C.M."/>
            <person name="Chio U.S."/>
            <person name="Deshpande I."/>
            <person name="Doan L."/>
            <person name="Faust B."/>
            <person name="Flores S."/>
            <person name="Jin M."/>
            <person name="Kim K."/>
            <person name="Lam V.L."/>
            <person name="Li F."/>
            <person name="Li J."/>
            <person name="Li Y.L."/>
            <person name="Li Y."/>
            <person name="Liu X."/>
            <person name="Lo M."/>
            <person name="Lopez K.E."/>
            <person name="Melo A.A."/>
            <person name="Moss F.R. III"/>
            <person name="Nguyen P."/>
            <person name="Paulino J."/>
            <person name="Pawar K.I."/>
            <person name="Peters J.K."/>
            <person name="Pospiech T.H. Jr."/>
            <person name="Safari M."/>
            <person name="Sangwan S."/>
            <person name="Schaefer K."/>
            <person name="Thomas P.V."/>
            <person name="Thwin A.C."/>
            <person name="Trenker R."/>
            <person name="Tse E."/>
            <person name="Tsui T.K.M."/>
            <person name="Wang F."/>
            <person name="Whitis N."/>
            <person name="Yu Z."/>
            <person name="Zhang K."/>
            <person name="Zhang Y."/>
            <person name="Zhou F."/>
            <person name="Saltzberg D."/>
            <person name="Hodder A.J."/>
            <person name="Shun-Shion A.S."/>
            <person name="Williams D.M."/>
            <person name="White K.M."/>
            <person name="Rosales R."/>
            <person name="Kehrer T."/>
            <person name="Miorin L."/>
            <person name="Moreno E."/>
            <person name="Patel A.H."/>
            <person name="Rihn S."/>
            <person name="Khalid M.M."/>
            <person name="Vallejo-Gracia A."/>
            <person name="Fozouni P."/>
            <person name="Simoneau C.R."/>
            <person name="Roth T.L."/>
            <person name="Wu D."/>
            <person name="Karim M.A."/>
            <person name="Ghoussaini M."/>
            <person name="Dunham I."/>
            <person name="Berardi F."/>
            <person name="Weigang S."/>
            <person name="Chazal M."/>
            <person name="Park J."/>
            <person name="Logue J."/>
            <person name="McGrath M."/>
            <person name="Weston S."/>
            <person name="Haupt R."/>
            <person name="Hastie C.J."/>
            <person name="Elliott M."/>
            <person name="Brown F."/>
            <person name="Burness K.A."/>
            <person name="Reid E."/>
            <person name="Dorward M."/>
            <person name="Johnson C."/>
            <person name="Wilkinson S.G."/>
            <person name="Geyer A."/>
            <person name="Giesel D.M."/>
            <person name="Baillie C."/>
            <person name="Raggett S."/>
            <person name="Leech H."/>
            <person name="Toth R."/>
            <person name="Goodman N."/>
            <person name="Keough K.C."/>
            <person name="Lind A.L."/>
            <person name="Klesh R.J."/>
            <person name="Hemphill K.R."/>
            <person name="Carlson-Stevermer J."/>
            <person name="Oki J."/>
            <person name="Holden K."/>
            <person name="Maures T."/>
            <person name="Pollard K.S."/>
            <person name="Sali A."/>
            <person name="Agard D.A."/>
            <person name="Cheng Y."/>
            <person name="Fraser J.S."/>
            <person name="Frost A."/>
            <person name="Jura N."/>
            <person name="Kortemme T."/>
            <person name="Manglik A."/>
            <person name="Southworth D.R."/>
            <person name="Stroud R.M."/>
            <person name="Alessi D.R."/>
            <person name="Davies P."/>
            <person name="Frieman M.B."/>
            <person name="Ideker T."/>
            <person name="Abate C."/>
            <person name="Jouvenet N."/>
            <person name="Kochs G."/>
            <person name="Shoichet B."/>
            <person name="Ott M."/>
            <person name="Palmarini M."/>
            <person name="Shokat K.M."/>
            <person name="Garcia-Sastre A."/>
            <person name="Rassen J.A."/>
            <person name="Grosse R."/>
            <person name="Rosenberg O.S."/>
            <person name="Verba K.A."/>
            <person name="Basler C.F."/>
            <person name="Vignuzzi M."/>
            <person name="Peden A.A."/>
            <person name="Beltrao P."/>
            <person name="Krogan N.J."/>
        </authorList>
    </citation>
    <scope>SUBCELLULAR LOCATION</scope>
</reference>
<organismHost>
    <name type="scientific">Homo sapiens</name>
    <name type="common">Human</name>
    <dbReference type="NCBI Taxonomy" id="9606"/>
</organismHost>
<keyword id="KW-1039">Host endosome</keyword>
<keyword id="KW-1040">Host Golgi apparatus</keyword>
<keyword id="KW-1043">Host membrane</keyword>
<keyword id="KW-0472">Membrane</keyword>
<keyword id="KW-1185">Reference proteome</keyword>
<keyword id="KW-0812">Transmembrane</keyword>
<keyword id="KW-1133">Transmembrane helix</keyword>
<accession>P0DTD8</accession>
<gene>
    <name type="ORF">7b</name>
</gene>
<proteinExistence type="evidence at protein level"/>
<evidence type="ECO:0000250" key="1">
    <source>
        <dbReference type="UniProtKB" id="Q7TFA1"/>
    </source>
</evidence>
<evidence type="ECO:0000255" key="2"/>
<evidence type="ECO:0000269" key="3">
    <source>
    </source>
</evidence>
<evidence type="ECO:0000305" key="4"/>
<feature type="chain" id="PRO_0000449799" description="ORF7b protein">
    <location>
        <begin position="1"/>
        <end position="43"/>
    </location>
</feature>
<feature type="transmembrane region" description="Helical" evidence="2">
    <location>
        <begin position="9"/>
        <end position="29"/>
    </location>
</feature>
<feature type="sequence variant" description="In strain: Omicron/BA.4." evidence="4">
    <original>L</original>
    <variation>F</variation>
    <location>
        <position position="11"/>
    </location>
</feature>
<sequence length="43" mass="5180">MIELSLIDFYLCFLAFLLFLVLIMLIIFWFSLELQDHNETCHA</sequence>
<organism>
    <name type="scientific">Severe acute respiratory syndrome coronavirus 2</name>
    <name type="common">2019-nCoV</name>
    <name type="synonym">SARS-CoV-2</name>
    <dbReference type="NCBI Taxonomy" id="2697049"/>
    <lineage>
        <taxon>Viruses</taxon>
        <taxon>Riboviria</taxon>
        <taxon>Orthornavirae</taxon>
        <taxon>Pisuviricota</taxon>
        <taxon>Pisoniviricetes</taxon>
        <taxon>Nidovirales</taxon>
        <taxon>Cornidovirineae</taxon>
        <taxon>Coronaviridae</taxon>
        <taxon>Orthocoronavirinae</taxon>
        <taxon>Betacoronavirus</taxon>
        <taxon>Sarbecovirus</taxon>
        <taxon>Severe acute respiratory syndrome coronavirus</taxon>
    </lineage>
</organism>
<protein>
    <recommendedName>
        <fullName>ORF7b protein</fullName>
        <shortName>ORF7b</shortName>
    </recommendedName>
    <alternativeName>
        <fullName>Accessory protein 7b</fullName>
    </alternativeName>
</protein>
<name>NS7B_SARS2</name>
<dbReference type="EMBL" id="MN908947">
    <property type="status" value="NOT_ANNOTATED_CDS"/>
    <property type="molecule type" value="Genomic_RNA"/>
</dbReference>
<dbReference type="BioGRID" id="4383871">
    <property type="interactions" value="1765"/>
</dbReference>
<dbReference type="FunCoup" id="P0DTD8">
    <property type="interactions" value="358"/>
</dbReference>
<dbReference type="IntAct" id="P0DTD8">
    <property type="interactions" value="481"/>
</dbReference>
<dbReference type="MINT" id="P0DTD8"/>
<dbReference type="AGR" id="RefSeq:YP_009725318"/>
<dbReference type="PRO" id="PR:P0DTD8"/>
<dbReference type="Proteomes" id="UP000464024">
    <property type="component" value="Genome"/>
</dbReference>
<dbReference type="GO" id="GO:0044175">
    <property type="term" value="C:host cell endosome membrane"/>
    <property type="evidence" value="ECO:0007669"/>
    <property type="project" value="UniProtKB-SubCell"/>
</dbReference>
<dbReference type="GO" id="GO:0044178">
    <property type="term" value="C:host cell Golgi membrane"/>
    <property type="evidence" value="ECO:0007669"/>
    <property type="project" value="UniProtKB-SubCell"/>
</dbReference>
<dbReference type="GO" id="GO:0016020">
    <property type="term" value="C:membrane"/>
    <property type="evidence" value="ECO:0007669"/>
    <property type="project" value="UniProtKB-KW"/>
</dbReference>
<dbReference type="GO" id="GO:0042802">
    <property type="term" value="F:identical protein binding"/>
    <property type="evidence" value="ECO:0000353"/>
    <property type="project" value="IntAct"/>
</dbReference>
<dbReference type="CDD" id="cd21623">
    <property type="entry name" value="ORF7b_SARS-CoV-2"/>
    <property type="match status" value="1"/>
</dbReference>
<dbReference type="InterPro" id="IPR021532">
    <property type="entry name" value="NS7B_bCoV"/>
</dbReference>
<dbReference type="Pfam" id="PF11395">
    <property type="entry name" value="bCoV_NS7B"/>
    <property type="match status" value="1"/>
</dbReference>
<comment type="interaction">
    <interactant intactId="EBI-25475914">
        <id>P0DTD8</id>
    </interactant>
    <interactant intactId="EBI-25475894">
        <id>P0DTC3</id>
        <label>3a</label>
    </interactant>
    <organismsDiffer>false</organismsDiffer>
    <experiments>3</experiments>
</comment>
<comment type="interaction">
    <interactant intactId="EBI-25475914">
        <id>P0DTD8</id>
    </interactant>
    <interactant intactId="EBI-25475903">
        <id>P0DTC7</id>
        <label>7a</label>
    </interactant>
    <organismsDiffer>false</organismsDiffer>
    <experiments>5</experiments>
</comment>
<comment type="interaction">
    <interactant intactId="EBI-25475914">
        <id>P0DTD8</id>
    </interactant>
    <interactant intactId="EBI-25475914">
        <id>P0DTD8</id>
        <label>7b</label>
    </interactant>
    <organismsDiffer>false</organismsDiffer>
    <experiments>4</experiments>
</comment>
<comment type="interaction">
    <interactant intactId="EBI-25475914">
        <id>P0DTD8</id>
    </interactant>
    <interactant intactId="EBI-25475850">
        <id>P0DTC4</id>
        <label>E</label>
    </interactant>
    <organismsDiffer>false</organismsDiffer>
    <experiments>5</experiments>
</comment>
<comment type="interaction">
    <interactant intactId="EBI-25475914">
        <id>P0DTD8</id>
    </interactant>
    <interactant intactId="EBI-25475853">
        <id>P0DTC5</id>
        <label>M</label>
    </interactant>
    <organismsDiffer>false</organismsDiffer>
    <experiments>4</experiments>
</comment>
<comment type="interaction">
    <interactant intactId="EBI-25475914">
        <id>P0DTD8</id>
    </interactant>
    <interactant intactId="EBI-995373">
        <id>Q7Z434</id>
        <label>MAVS</label>
    </interactant>
    <organismsDiffer>true</organismsDiffer>
    <experiments>3</experiments>
</comment>
<comment type="interaction">
    <interactant intactId="EBI-25475914">
        <id>P0DTD8</id>
    </interactant>
    <interactant intactId="EBI-1788819">
        <id>P60468</id>
        <label>SEC61B</label>
    </interactant>
    <organismsDiffer>true</organismsDiffer>
    <experiments>3</experiments>
</comment>
<comment type="interaction">
    <interactant intactId="EBI-25475914">
        <id>P0DTD8</id>
    </interactant>
    <interactant intactId="EBI-25678971">
        <id>Q9NPR2</id>
        <label>SEMA4B</label>
    </interactant>
    <organismsDiffer>true</organismsDiffer>
    <experiments>3</experiments>
</comment>
<comment type="interaction">
    <interactant intactId="EBI-25475914">
        <id>P0DTD8</id>
    </interactant>
    <interactant intactId="EBI-347996">
        <id>O43765</id>
        <label>SGTA</label>
    </interactant>
    <organismsDiffer>true</organismsDiffer>
    <experiments>3</experiments>
</comment>
<comment type="interaction">
    <interactant intactId="EBI-25475914">
        <id>P0DTD8</id>
    </interactant>
    <interactant intactId="EBI-719212">
        <id>P46977</id>
        <label>STT3A</label>
    </interactant>
    <organismsDiffer>true</organismsDiffer>
    <experiments>3</experiments>
</comment>
<comment type="interaction">
    <interactant intactId="EBI-25475914">
        <id>P0DTD8</id>
    </interactant>
    <interactant intactId="EBI-8638294">
        <id>Q9NUH8</id>
        <label>TMEM14B</label>
    </interactant>
    <organismsDiffer>true</organismsDiffer>
    <experiments>3</experiments>
</comment>
<comment type="interaction">
    <interactant intactId="EBI-25475914">
        <id>P0DTD8</id>
    </interactant>
    <interactant intactId="EBI-10823938">
        <id>Q9NWC5</id>
        <label>TMEM45A</label>
    </interactant>
    <organismsDiffer>true</organismsDiffer>
    <experiments>3</experiments>
</comment>
<comment type="interaction">
    <interactant intactId="EBI-25475914">
        <id>P0DTD8</id>
    </interactant>
    <interactant intactId="EBI-4401271">
        <id>Q9H1C4</id>
        <label>UNC93B1</label>
    </interactant>
    <organismsDiffer>true</organismsDiffer>
    <experiments>2</experiments>
</comment>
<comment type="subcellular location">
    <subcellularLocation>
        <location evidence="3">Host Golgi apparatus membrane</location>
        <topology evidence="1">Single-pass membrane protein</topology>
    </subcellularLocation>
    <subcellularLocation>
        <location evidence="3">Host endosome membrane</location>
        <topology evidence="1">Single-pass membrane protein</topology>
    </subcellularLocation>
</comment>